<dbReference type="EMBL" id="BA000035">
    <property type="protein sequence ID" value="BAC18434.1"/>
    <property type="molecule type" value="Genomic_DNA"/>
</dbReference>
<dbReference type="RefSeq" id="WP_006767624.1">
    <property type="nucleotide sequence ID" value="NC_004369.1"/>
</dbReference>
<dbReference type="SMR" id="Q8FTE5"/>
<dbReference type="STRING" id="196164.gene:10742043"/>
<dbReference type="KEGG" id="cef:CE1624"/>
<dbReference type="eggNOG" id="ENOG5033BS6">
    <property type="taxonomic scope" value="Bacteria"/>
</dbReference>
<dbReference type="HOGENOM" id="CLU_183816_1_0_11"/>
<dbReference type="OrthoDB" id="3254977at2"/>
<dbReference type="UniPathway" id="UPA00997"/>
<dbReference type="Proteomes" id="UP000001409">
    <property type="component" value="Chromosome"/>
</dbReference>
<dbReference type="GO" id="GO:0070628">
    <property type="term" value="F:proteasome binding"/>
    <property type="evidence" value="ECO:0007669"/>
    <property type="project" value="UniProtKB-UniRule"/>
</dbReference>
<dbReference type="GO" id="GO:0031386">
    <property type="term" value="F:protein tag activity"/>
    <property type="evidence" value="ECO:0007669"/>
    <property type="project" value="UniProtKB-UniRule"/>
</dbReference>
<dbReference type="GO" id="GO:0019941">
    <property type="term" value="P:modification-dependent protein catabolic process"/>
    <property type="evidence" value="ECO:0007669"/>
    <property type="project" value="UniProtKB-UniRule"/>
</dbReference>
<dbReference type="GO" id="GO:0010498">
    <property type="term" value="P:proteasomal protein catabolic process"/>
    <property type="evidence" value="ECO:0007669"/>
    <property type="project" value="UniProtKB-UniRule"/>
</dbReference>
<dbReference type="GO" id="GO:0070490">
    <property type="term" value="P:protein pupylation"/>
    <property type="evidence" value="ECO:0007669"/>
    <property type="project" value="UniProtKB-UniRule"/>
</dbReference>
<dbReference type="HAMAP" id="MF_02106">
    <property type="entry name" value="Pup"/>
    <property type="match status" value="1"/>
</dbReference>
<dbReference type="InterPro" id="IPR008515">
    <property type="entry name" value="Ubiquitin-like_Pup"/>
</dbReference>
<dbReference type="NCBIfam" id="TIGR03687">
    <property type="entry name" value="pupylate_cterm"/>
    <property type="match status" value="1"/>
</dbReference>
<dbReference type="Pfam" id="PF05639">
    <property type="entry name" value="Pup"/>
    <property type="match status" value="1"/>
</dbReference>
<feature type="chain" id="PRO_0000390575" description="Prokaryotic ubiquitin-like protein Pup">
    <location>
        <begin position="1"/>
        <end position="63"/>
    </location>
</feature>
<feature type="region of interest" description="Disordered" evidence="2">
    <location>
        <begin position="1"/>
        <end position="28"/>
    </location>
</feature>
<feature type="region of interest" description="ARC ATPase binding" evidence="1">
    <location>
        <begin position="19"/>
        <end position="57"/>
    </location>
</feature>
<feature type="cross-link" description="Isoglutamyl lysine isopeptide (Glu-Lys) (interchain with K-? in acceptor proteins)" evidence="1">
    <location>
        <position position="63"/>
    </location>
</feature>
<proteinExistence type="inferred from homology"/>
<accession>Q8FTE5</accession>
<name>PUP_COREF</name>
<sequence length="63" mass="6876">MSDRQTQIPAGGGREDDHDDQVQSAGQVQVNTEGVDDLLDEIDGLLENNAEEFVRSYVQKGGE</sequence>
<protein>
    <recommendedName>
        <fullName evidence="1">Prokaryotic ubiquitin-like protein Pup</fullName>
    </recommendedName>
    <alternativeName>
        <fullName evidence="1">Bacterial ubiquitin-like modifier</fullName>
    </alternativeName>
</protein>
<comment type="function">
    <text evidence="1">Protein modifier that is covalently attached to lysine residues of substrate proteins, thereby targeting them for proteasomal degradation. The tagging system is termed pupylation.</text>
</comment>
<comment type="pathway">
    <text evidence="1">Protein degradation; proteasomal Pup-dependent pathway.</text>
</comment>
<comment type="subunit">
    <text evidence="1">Strongly interacts with the proteasome-associated ATPase ARC through a hydrophobic interface; the interacting region of Pup lies in its C-terminal half. There is one Pup binding site per ARC hexamer ring.</text>
</comment>
<comment type="domain">
    <text evidence="1">The N-terminal unstructured half of Pup provides a signal required to initiate unfolding and degradation by the proteasome but is not needed for pupylation, while the C-terminal helical half of Pup interacts with ARC to target proteins to the proteasome.</text>
</comment>
<comment type="similarity">
    <text evidence="1">Belongs to the prokaryotic ubiquitin-like protein family.</text>
</comment>
<reference key="1">
    <citation type="journal article" date="2003" name="Genome Res.">
        <title>Comparative complete genome sequence analysis of the amino acid replacements responsible for the thermostability of Corynebacterium efficiens.</title>
        <authorList>
            <person name="Nishio Y."/>
            <person name="Nakamura Y."/>
            <person name="Kawarabayasi Y."/>
            <person name="Usuda Y."/>
            <person name="Kimura E."/>
            <person name="Sugimoto S."/>
            <person name="Matsui K."/>
            <person name="Yamagishi A."/>
            <person name="Kikuchi H."/>
            <person name="Ikeo K."/>
            <person name="Gojobori T."/>
        </authorList>
    </citation>
    <scope>NUCLEOTIDE SEQUENCE [LARGE SCALE GENOMIC DNA]</scope>
    <source>
        <strain>DSM 44549 / YS-314 / AJ 12310 / JCM 11189 / NBRC 100395</strain>
    </source>
</reference>
<organism>
    <name type="scientific">Corynebacterium efficiens (strain DSM 44549 / YS-314 / AJ 12310 / JCM 11189 / NBRC 100395)</name>
    <dbReference type="NCBI Taxonomy" id="196164"/>
    <lineage>
        <taxon>Bacteria</taxon>
        <taxon>Bacillati</taxon>
        <taxon>Actinomycetota</taxon>
        <taxon>Actinomycetes</taxon>
        <taxon>Mycobacteriales</taxon>
        <taxon>Corynebacteriaceae</taxon>
        <taxon>Corynebacterium</taxon>
    </lineage>
</organism>
<evidence type="ECO:0000255" key="1">
    <source>
        <dbReference type="HAMAP-Rule" id="MF_02106"/>
    </source>
</evidence>
<evidence type="ECO:0000256" key="2">
    <source>
        <dbReference type="SAM" id="MobiDB-lite"/>
    </source>
</evidence>
<gene>
    <name evidence="1" type="primary">pup</name>
    <name type="ordered locus">CE1624</name>
</gene>
<keyword id="KW-1017">Isopeptide bond</keyword>
<keyword id="KW-1185">Reference proteome</keyword>
<keyword id="KW-0833">Ubl conjugation pathway</keyword>